<gene>
    <name evidence="1" type="primary">groEL</name>
    <name evidence="1" type="synonym">groL</name>
</gene>
<name>CH60_BUCCM</name>
<reference key="1">
    <citation type="journal article" date="2002" name="Mol. Biol. Evol.">
        <title>The evolution of the heat-shock protein GroEL from Buchnera, the primary endosymbiont of aphids, is governed by positive selection.</title>
        <authorList>
            <person name="Fares M.A."/>
            <person name="Barrio E."/>
            <person name="Sabater-Munoz B."/>
            <person name="Moya A."/>
        </authorList>
    </citation>
    <scope>NUCLEOTIDE SEQUENCE [GENOMIC DNA]</scope>
</reference>
<proteinExistence type="inferred from homology"/>
<sequence length="551" mass="58472">MAAKDVKFGSEARAKMLRGVNILADAVKVTLGPKGRNVVLDKSFGAPSITKDGVSVAREIELEDKFENMGAQMVKEVASKANDVAGDGTTTATLLAQSIVNEGLKAVAAGMNPMDLKRGIDQAVIKAVKELKKLSVPCSDSKAITQVGTISANADETVGSLISEAMDKVGNDGVITVEEGTGLEDELDVVKGMQFDRGYLSPYFINKPETGNIELENPYILMVDKKISNIRDILSLLESVAKSGKPLLIIAEDLEGEALATLVVNSMRGIVKIAAVKAPGFGDRRKAMLQDISILTFLYNSDVISEELAMDLDKTTLEDLGQAKGVVITKDHTIIVGSGKKEIFKQILIRQQLIESTSDYDKEKLNERLAKLSGGVAVLKVGAATEVEMKEKKARVEDALHATRAAVEEGVVAGGGVALVRVAEKISRLKGQNEDQNVGIRVAVRSMEAPLRQIVANSGEEPSVVTNNVKDGVGNYGYNAATDQYGDMIKFGILDPTKVTRSALQYAASVAGLMITTECMVTDSPKEDKSSDMPSPSAGGMGGMGGMGGMM</sequence>
<protein>
    <recommendedName>
        <fullName evidence="1">Chaperonin GroEL</fullName>
        <ecNumber evidence="1">5.6.1.7</ecNumber>
    </recommendedName>
    <alternativeName>
        <fullName evidence="1">60 kDa chaperonin</fullName>
    </alternativeName>
    <alternativeName>
        <fullName evidence="1">Chaperonin-60</fullName>
        <shortName evidence="1">Cpn60</shortName>
    </alternativeName>
</protein>
<comment type="function">
    <text evidence="1">Together with its co-chaperonin GroES, plays an essential role in assisting protein folding. The GroEL-GroES system forms a nano-cage that allows encapsulation of the non-native substrate proteins and provides a physical environment optimized to promote and accelerate protein folding.</text>
</comment>
<comment type="catalytic activity">
    <reaction evidence="1">
        <text>ATP + H2O + a folded polypeptide = ADP + phosphate + an unfolded polypeptide.</text>
        <dbReference type="EC" id="5.6.1.7"/>
    </reaction>
</comment>
<comment type="subunit">
    <text evidence="1">Forms a cylinder of 14 subunits composed of two heptameric rings stacked back-to-back. Interacts with the co-chaperonin GroES.</text>
</comment>
<comment type="subcellular location">
    <subcellularLocation>
        <location evidence="1">Cytoplasm</location>
    </subcellularLocation>
</comment>
<comment type="similarity">
    <text evidence="1">Belongs to the chaperonin (HSP60) family.</text>
</comment>
<organism>
    <name type="scientific">Buchnera aphidicola subsp. Chaetophorus leucomelas</name>
    <dbReference type="NCBI Taxonomy" id="189837"/>
    <lineage>
        <taxon>Bacteria</taxon>
        <taxon>Pseudomonadati</taxon>
        <taxon>Pseudomonadota</taxon>
        <taxon>Gammaproteobacteria</taxon>
        <taxon>Enterobacterales</taxon>
        <taxon>Erwiniaceae</taxon>
        <taxon>Buchnera</taxon>
    </lineage>
</organism>
<accession>Q8KIX0</accession>
<keyword id="KW-0067">ATP-binding</keyword>
<keyword id="KW-0143">Chaperone</keyword>
<keyword id="KW-0963">Cytoplasm</keyword>
<keyword id="KW-0413">Isomerase</keyword>
<keyword id="KW-0547">Nucleotide-binding</keyword>
<dbReference type="EC" id="5.6.1.7" evidence="1"/>
<dbReference type="EMBL" id="AJ439087">
    <property type="protein sequence ID" value="CAD27799.1"/>
    <property type="molecule type" value="Genomic_DNA"/>
</dbReference>
<dbReference type="SMR" id="Q8KIX0"/>
<dbReference type="GO" id="GO:0005737">
    <property type="term" value="C:cytoplasm"/>
    <property type="evidence" value="ECO:0007669"/>
    <property type="project" value="UniProtKB-SubCell"/>
</dbReference>
<dbReference type="GO" id="GO:0005524">
    <property type="term" value="F:ATP binding"/>
    <property type="evidence" value="ECO:0007669"/>
    <property type="project" value="UniProtKB-UniRule"/>
</dbReference>
<dbReference type="GO" id="GO:0140662">
    <property type="term" value="F:ATP-dependent protein folding chaperone"/>
    <property type="evidence" value="ECO:0007669"/>
    <property type="project" value="InterPro"/>
</dbReference>
<dbReference type="GO" id="GO:0016853">
    <property type="term" value="F:isomerase activity"/>
    <property type="evidence" value="ECO:0007669"/>
    <property type="project" value="UniProtKB-KW"/>
</dbReference>
<dbReference type="GO" id="GO:0051082">
    <property type="term" value="F:unfolded protein binding"/>
    <property type="evidence" value="ECO:0007669"/>
    <property type="project" value="UniProtKB-UniRule"/>
</dbReference>
<dbReference type="GO" id="GO:0042026">
    <property type="term" value="P:protein refolding"/>
    <property type="evidence" value="ECO:0007669"/>
    <property type="project" value="UniProtKB-UniRule"/>
</dbReference>
<dbReference type="CDD" id="cd03344">
    <property type="entry name" value="GroEL"/>
    <property type="match status" value="1"/>
</dbReference>
<dbReference type="FunFam" id="1.10.560.10:FF:000001">
    <property type="entry name" value="60 kDa chaperonin"/>
    <property type="match status" value="1"/>
</dbReference>
<dbReference type="FunFam" id="3.50.7.10:FF:000001">
    <property type="entry name" value="60 kDa chaperonin"/>
    <property type="match status" value="1"/>
</dbReference>
<dbReference type="Gene3D" id="3.50.7.10">
    <property type="entry name" value="GroEL"/>
    <property type="match status" value="1"/>
</dbReference>
<dbReference type="Gene3D" id="1.10.560.10">
    <property type="entry name" value="GroEL-like equatorial domain"/>
    <property type="match status" value="1"/>
</dbReference>
<dbReference type="Gene3D" id="3.30.260.10">
    <property type="entry name" value="TCP-1-like chaperonin intermediate domain"/>
    <property type="match status" value="1"/>
</dbReference>
<dbReference type="HAMAP" id="MF_00600">
    <property type="entry name" value="CH60"/>
    <property type="match status" value="1"/>
</dbReference>
<dbReference type="InterPro" id="IPR018370">
    <property type="entry name" value="Chaperonin_Cpn60_CS"/>
</dbReference>
<dbReference type="InterPro" id="IPR001844">
    <property type="entry name" value="Cpn60/GroEL"/>
</dbReference>
<dbReference type="InterPro" id="IPR002423">
    <property type="entry name" value="Cpn60/GroEL/TCP-1"/>
</dbReference>
<dbReference type="InterPro" id="IPR027409">
    <property type="entry name" value="GroEL-like_apical_dom_sf"/>
</dbReference>
<dbReference type="InterPro" id="IPR027413">
    <property type="entry name" value="GROEL-like_equatorial_sf"/>
</dbReference>
<dbReference type="InterPro" id="IPR027410">
    <property type="entry name" value="TCP-1-like_intermed_sf"/>
</dbReference>
<dbReference type="NCBIfam" id="TIGR02348">
    <property type="entry name" value="GroEL"/>
    <property type="match status" value="1"/>
</dbReference>
<dbReference type="NCBIfam" id="NF000592">
    <property type="entry name" value="PRK00013.1"/>
    <property type="match status" value="1"/>
</dbReference>
<dbReference type="NCBIfam" id="NF009487">
    <property type="entry name" value="PRK12849.1"/>
    <property type="match status" value="1"/>
</dbReference>
<dbReference type="NCBIfam" id="NF009488">
    <property type="entry name" value="PRK12850.1"/>
    <property type="match status" value="1"/>
</dbReference>
<dbReference type="NCBIfam" id="NF009489">
    <property type="entry name" value="PRK12851.1"/>
    <property type="match status" value="1"/>
</dbReference>
<dbReference type="PANTHER" id="PTHR45633">
    <property type="entry name" value="60 KDA HEAT SHOCK PROTEIN, MITOCHONDRIAL"/>
    <property type="match status" value="1"/>
</dbReference>
<dbReference type="Pfam" id="PF00118">
    <property type="entry name" value="Cpn60_TCP1"/>
    <property type="match status" value="1"/>
</dbReference>
<dbReference type="PRINTS" id="PR00298">
    <property type="entry name" value="CHAPERONIN60"/>
</dbReference>
<dbReference type="SUPFAM" id="SSF52029">
    <property type="entry name" value="GroEL apical domain-like"/>
    <property type="match status" value="1"/>
</dbReference>
<dbReference type="SUPFAM" id="SSF48592">
    <property type="entry name" value="GroEL equatorial domain-like"/>
    <property type="match status" value="1"/>
</dbReference>
<dbReference type="SUPFAM" id="SSF54849">
    <property type="entry name" value="GroEL-intermediate domain like"/>
    <property type="match status" value="1"/>
</dbReference>
<dbReference type="PROSITE" id="PS00296">
    <property type="entry name" value="CHAPERONINS_CPN60"/>
    <property type="match status" value="1"/>
</dbReference>
<evidence type="ECO:0000255" key="1">
    <source>
        <dbReference type="HAMAP-Rule" id="MF_00600"/>
    </source>
</evidence>
<evidence type="ECO:0000256" key="2">
    <source>
        <dbReference type="SAM" id="MobiDB-lite"/>
    </source>
</evidence>
<feature type="chain" id="PRO_0000063308" description="Chaperonin GroEL">
    <location>
        <begin position="1"/>
        <end position="551"/>
    </location>
</feature>
<feature type="region of interest" description="Disordered" evidence="2">
    <location>
        <begin position="523"/>
        <end position="551"/>
    </location>
</feature>
<feature type="compositionally biased region" description="Gly residues" evidence="2">
    <location>
        <begin position="539"/>
        <end position="551"/>
    </location>
</feature>
<feature type="binding site" evidence="1">
    <location>
        <begin position="30"/>
        <end position="33"/>
    </location>
    <ligand>
        <name>ATP</name>
        <dbReference type="ChEBI" id="CHEBI:30616"/>
    </ligand>
</feature>
<feature type="binding site" evidence="1">
    <location>
        <position position="51"/>
    </location>
    <ligand>
        <name>ATP</name>
        <dbReference type="ChEBI" id="CHEBI:30616"/>
    </ligand>
</feature>
<feature type="binding site" evidence="1">
    <location>
        <begin position="87"/>
        <end position="91"/>
    </location>
    <ligand>
        <name>ATP</name>
        <dbReference type="ChEBI" id="CHEBI:30616"/>
    </ligand>
</feature>
<feature type="binding site" evidence="1">
    <location>
        <position position="415"/>
    </location>
    <ligand>
        <name>ATP</name>
        <dbReference type="ChEBI" id="CHEBI:30616"/>
    </ligand>
</feature>
<feature type="binding site" evidence="1">
    <location>
        <begin position="479"/>
        <end position="481"/>
    </location>
    <ligand>
        <name>ATP</name>
        <dbReference type="ChEBI" id="CHEBI:30616"/>
    </ligand>
</feature>
<feature type="binding site" evidence="1">
    <location>
        <position position="495"/>
    </location>
    <ligand>
        <name>ATP</name>
        <dbReference type="ChEBI" id="CHEBI:30616"/>
    </ligand>
</feature>